<comment type="function">
    <text evidence="1">Binds the 23S rRNA.</text>
</comment>
<comment type="subunit">
    <text evidence="1">Part of the 50S ribosomal subunit.</text>
</comment>
<comment type="similarity">
    <text evidence="1">Belongs to the bacterial ribosomal protein bL31 family. Type A subfamily.</text>
</comment>
<proteinExistence type="inferred from homology"/>
<dbReference type="EMBL" id="CP000356">
    <property type="protein sequence ID" value="ABF53661.1"/>
    <property type="molecule type" value="Genomic_DNA"/>
</dbReference>
<dbReference type="RefSeq" id="WP_011542237.1">
    <property type="nucleotide sequence ID" value="NC_008048.1"/>
</dbReference>
<dbReference type="SMR" id="Q1GRR1"/>
<dbReference type="STRING" id="317655.Sala_1949"/>
<dbReference type="KEGG" id="sal:Sala_1949"/>
<dbReference type="eggNOG" id="COG0254">
    <property type="taxonomic scope" value="Bacteria"/>
</dbReference>
<dbReference type="HOGENOM" id="CLU_114306_3_2_5"/>
<dbReference type="OrthoDB" id="9803251at2"/>
<dbReference type="Proteomes" id="UP000006578">
    <property type="component" value="Chromosome"/>
</dbReference>
<dbReference type="GO" id="GO:1990904">
    <property type="term" value="C:ribonucleoprotein complex"/>
    <property type="evidence" value="ECO:0007669"/>
    <property type="project" value="UniProtKB-KW"/>
</dbReference>
<dbReference type="GO" id="GO:0005840">
    <property type="term" value="C:ribosome"/>
    <property type="evidence" value="ECO:0007669"/>
    <property type="project" value="UniProtKB-KW"/>
</dbReference>
<dbReference type="GO" id="GO:0019843">
    <property type="term" value="F:rRNA binding"/>
    <property type="evidence" value="ECO:0007669"/>
    <property type="project" value="UniProtKB-KW"/>
</dbReference>
<dbReference type="GO" id="GO:0003735">
    <property type="term" value="F:structural constituent of ribosome"/>
    <property type="evidence" value="ECO:0007669"/>
    <property type="project" value="InterPro"/>
</dbReference>
<dbReference type="GO" id="GO:0006412">
    <property type="term" value="P:translation"/>
    <property type="evidence" value="ECO:0007669"/>
    <property type="project" value="UniProtKB-UniRule"/>
</dbReference>
<dbReference type="Gene3D" id="4.10.830.30">
    <property type="entry name" value="Ribosomal protein L31"/>
    <property type="match status" value="1"/>
</dbReference>
<dbReference type="HAMAP" id="MF_00501">
    <property type="entry name" value="Ribosomal_bL31_1"/>
    <property type="match status" value="1"/>
</dbReference>
<dbReference type="InterPro" id="IPR034704">
    <property type="entry name" value="Ribosomal_bL28/bL31-like_sf"/>
</dbReference>
<dbReference type="InterPro" id="IPR002150">
    <property type="entry name" value="Ribosomal_bL31"/>
</dbReference>
<dbReference type="InterPro" id="IPR027491">
    <property type="entry name" value="Ribosomal_bL31_A"/>
</dbReference>
<dbReference type="InterPro" id="IPR042105">
    <property type="entry name" value="Ribosomal_bL31_sf"/>
</dbReference>
<dbReference type="NCBIfam" id="TIGR00105">
    <property type="entry name" value="L31"/>
    <property type="match status" value="1"/>
</dbReference>
<dbReference type="NCBIfam" id="NF001809">
    <property type="entry name" value="PRK00528.1"/>
    <property type="match status" value="1"/>
</dbReference>
<dbReference type="PANTHER" id="PTHR33280">
    <property type="entry name" value="50S RIBOSOMAL PROTEIN L31, CHLOROPLASTIC"/>
    <property type="match status" value="1"/>
</dbReference>
<dbReference type="PANTHER" id="PTHR33280:SF6">
    <property type="entry name" value="LARGE RIBOSOMAL SUBUNIT PROTEIN BL31A"/>
    <property type="match status" value="1"/>
</dbReference>
<dbReference type="Pfam" id="PF01197">
    <property type="entry name" value="Ribosomal_L31"/>
    <property type="match status" value="1"/>
</dbReference>
<dbReference type="PRINTS" id="PR01249">
    <property type="entry name" value="RIBOSOMALL31"/>
</dbReference>
<dbReference type="SUPFAM" id="SSF143800">
    <property type="entry name" value="L28p-like"/>
    <property type="match status" value="1"/>
</dbReference>
<dbReference type="PROSITE" id="PS01143">
    <property type="entry name" value="RIBOSOMAL_L31"/>
    <property type="match status" value="1"/>
</dbReference>
<name>RL31_SPHAL</name>
<protein>
    <recommendedName>
        <fullName evidence="1">Large ribosomal subunit protein bL31</fullName>
    </recommendedName>
    <alternativeName>
        <fullName evidence="2">50S ribosomal protein L31</fullName>
    </alternativeName>
</protein>
<keyword id="KW-1185">Reference proteome</keyword>
<keyword id="KW-0687">Ribonucleoprotein</keyword>
<keyword id="KW-0689">Ribosomal protein</keyword>
<keyword id="KW-0694">RNA-binding</keyword>
<keyword id="KW-0699">rRNA-binding</keyword>
<accession>Q1GRR1</accession>
<gene>
    <name evidence="1" type="primary">rpmE</name>
    <name type="ordered locus">Sala_1949</name>
</gene>
<organism>
    <name type="scientific">Sphingopyxis alaskensis (strain DSM 13593 / LMG 18877 / RB2256)</name>
    <name type="common">Sphingomonas alaskensis</name>
    <dbReference type="NCBI Taxonomy" id="317655"/>
    <lineage>
        <taxon>Bacteria</taxon>
        <taxon>Pseudomonadati</taxon>
        <taxon>Pseudomonadota</taxon>
        <taxon>Alphaproteobacteria</taxon>
        <taxon>Sphingomonadales</taxon>
        <taxon>Sphingomonadaceae</taxon>
        <taxon>Sphingopyxis</taxon>
    </lineage>
</organism>
<sequence>MKKDIHPDYHMITVKMTDGTEYQTRSTWGSEGDVMTLEIDPTAHPAWTGGQGRMLDSGGQVAKFNKRFGGLTLKR</sequence>
<reference key="1">
    <citation type="journal article" date="2009" name="Proc. Natl. Acad. Sci. U.S.A.">
        <title>The genomic basis of trophic strategy in marine bacteria.</title>
        <authorList>
            <person name="Lauro F.M."/>
            <person name="McDougald D."/>
            <person name="Thomas T."/>
            <person name="Williams T.J."/>
            <person name="Egan S."/>
            <person name="Rice S."/>
            <person name="DeMaere M.Z."/>
            <person name="Ting L."/>
            <person name="Ertan H."/>
            <person name="Johnson J."/>
            <person name="Ferriera S."/>
            <person name="Lapidus A."/>
            <person name="Anderson I."/>
            <person name="Kyrpides N."/>
            <person name="Munk A.C."/>
            <person name="Detter C."/>
            <person name="Han C.S."/>
            <person name="Brown M.V."/>
            <person name="Robb F.T."/>
            <person name="Kjelleberg S."/>
            <person name="Cavicchioli R."/>
        </authorList>
    </citation>
    <scope>NUCLEOTIDE SEQUENCE [LARGE SCALE GENOMIC DNA]</scope>
    <source>
        <strain>DSM 13593 / LMG 18877 / RB2256</strain>
    </source>
</reference>
<feature type="chain" id="PRO_0000259232" description="Large ribosomal subunit protein bL31">
    <location>
        <begin position="1"/>
        <end position="75"/>
    </location>
</feature>
<evidence type="ECO:0000255" key="1">
    <source>
        <dbReference type="HAMAP-Rule" id="MF_00501"/>
    </source>
</evidence>
<evidence type="ECO:0000305" key="2"/>